<reference key="1">
    <citation type="journal article" date="2002" name="Nature">
        <title>The genome sequence of Schizosaccharomyces pombe.</title>
        <authorList>
            <person name="Wood V."/>
            <person name="Gwilliam R."/>
            <person name="Rajandream M.A."/>
            <person name="Lyne M.H."/>
            <person name="Lyne R."/>
            <person name="Stewart A."/>
            <person name="Sgouros J.G."/>
            <person name="Peat N."/>
            <person name="Hayles J."/>
            <person name="Baker S.G."/>
            <person name="Basham D."/>
            <person name="Bowman S."/>
            <person name="Brooks K."/>
            <person name="Brown D."/>
            <person name="Brown S."/>
            <person name="Chillingworth T."/>
            <person name="Churcher C.M."/>
            <person name="Collins M."/>
            <person name="Connor R."/>
            <person name="Cronin A."/>
            <person name="Davis P."/>
            <person name="Feltwell T."/>
            <person name="Fraser A."/>
            <person name="Gentles S."/>
            <person name="Goble A."/>
            <person name="Hamlin N."/>
            <person name="Harris D.E."/>
            <person name="Hidalgo J."/>
            <person name="Hodgson G."/>
            <person name="Holroyd S."/>
            <person name="Hornsby T."/>
            <person name="Howarth S."/>
            <person name="Huckle E.J."/>
            <person name="Hunt S."/>
            <person name="Jagels K."/>
            <person name="James K.D."/>
            <person name="Jones L."/>
            <person name="Jones M."/>
            <person name="Leather S."/>
            <person name="McDonald S."/>
            <person name="McLean J."/>
            <person name="Mooney P."/>
            <person name="Moule S."/>
            <person name="Mungall K.L."/>
            <person name="Murphy L.D."/>
            <person name="Niblett D."/>
            <person name="Odell C."/>
            <person name="Oliver K."/>
            <person name="O'Neil S."/>
            <person name="Pearson D."/>
            <person name="Quail M.A."/>
            <person name="Rabbinowitsch E."/>
            <person name="Rutherford K.M."/>
            <person name="Rutter S."/>
            <person name="Saunders D."/>
            <person name="Seeger K."/>
            <person name="Sharp S."/>
            <person name="Skelton J."/>
            <person name="Simmonds M.N."/>
            <person name="Squares R."/>
            <person name="Squares S."/>
            <person name="Stevens K."/>
            <person name="Taylor K."/>
            <person name="Taylor R.G."/>
            <person name="Tivey A."/>
            <person name="Walsh S.V."/>
            <person name="Warren T."/>
            <person name="Whitehead S."/>
            <person name="Woodward J.R."/>
            <person name="Volckaert G."/>
            <person name="Aert R."/>
            <person name="Robben J."/>
            <person name="Grymonprez B."/>
            <person name="Weltjens I."/>
            <person name="Vanstreels E."/>
            <person name="Rieger M."/>
            <person name="Schaefer M."/>
            <person name="Mueller-Auer S."/>
            <person name="Gabel C."/>
            <person name="Fuchs M."/>
            <person name="Duesterhoeft A."/>
            <person name="Fritzc C."/>
            <person name="Holzer E."/>
            <person name="Moestl D."/>
            <person name="Hilbert H."/>
            <person name="Borzym K."/>
            <person name="Langer I."/>
            <person name="Beck A."/>
            <person name="Lehrach H."/>
            <person name="Reinhardt R."/>
            <person name="Pohl T.M."/>
            <person name="Eger P."/>
            <person name="Zimmermann W."/>
            <person name="Wedler H."/>
            <person name="Wambutt R."/>
            <person name="Purnelle B."/>
            <person name="Goffeau A."/>
            <person name="Cadieu E."/>
            <person name="Dreano S."/>
            <person name="Gloux S."/>
            <person name="Lelaure V."/>
            <person name="Mottier S."/>
            <person name="Galibert F."/>
            <person name="Aves S.J."/>
            <person name="Xiang Z."/>
            <person name="Hunt C."/>
            <person name="Moore K."/>
            <person name="Hurst S.M."/>
            <person name="Lucas M."/>
            <person name="Rochet M."/>
            <person name="Gaillardin C."/>
            <person name="Tallada V.A."/>
            <person name="Garzon A."/>
            <person name="Thode G."/>
            <person name="Daga R.R."/>
            <person name="Cruzado L."/>
            <person name="Jimenez J."/>
            <person name="Sanchez M."/>
            <person name="del Rey F."/>
            <person name="Benito J."/>
            <person name="Dominguez A."/>
            <person name="Revuelta J.L."/>
            <person name="Moreno S."/>
            <person name="Armstrong J."/>
            <person name="Forsburg S.L."/>
            <person name="Cerutti L."/>
            <person name="Lowe T."/>
            <person name="McCombie W.R."/>
            <person name="Paulsen I."/>
            <person name="Potashkin J."/>
            <person name="Shpakovski G.V."/>
            <person name="Ussery D."/>
            <person name="Barrell B.G."/>
            <person name="Nurse P."/>
        </authorList>
    </citation>
    <scope>NUCLEOTIDE SEQUENCE [LARGE SCALE GENOMIC DNA]</scope>
    <source>
        <strain>972 / ATCC 24843</strain>
    </source>
</reference>
<reference key="2">
    <citation type="journal article" date="2005" name="Curr. Biol.">
        <title>A large-scale screen in S. pombe identifies seven novel genes required for critical meiotic events.</title>
        <authorList>
            <person name="Martin-Castellanos C."/>
            <person name="Blanco M."/>
            <person name="Rozalen A.E."/>
            <person name="Perez-Hidalgo L."/>
            <person name="Garcia A.I."/>
            <person name="Conde F."/>
            <person name="Mata J."/>
            <person name="Ellermeier C."/>
            <person name="Davis L."/>
            <person name="San-Segundo P."/>
            <person name="Smith G.R."/>
            <person name="Moreno S."/>
        </authorList>
    </citation>
    <scope>FUNCTION IN MEIOSIS</scope>
</reference>
<feature type="chain" id="PRO_0000116746" description="Meiotically up-regulated gene 65 protein">
    <location>
        <begin position="1"/>
        <end position="248"/>
    </location>
</feature>
<sequence>MTESERTSHLDILYENQRGIMLCGVPYFSEKSLLNFDPAPWVDQHFVASPVSTKTATCPDPSWEWAWQRWYIDMSGDVDESGWQYGFSFTMNNWHGKPVSLHSFVRRRRWIRKRKKKELRRDELPLVPESFTISSSYPIQRSSTQTRSSFEDDSSDFDLSEVTTIPALLRALQDSRIDREKLEALATFLASASIDEKVYVKNCKKDLLKNFVFEHSCRKANELLNASLTAAEASTSQVALRESPTPQD</sequence>
<name>MUG65_SCHPO</name>
<proteinExistence type="evidence at protein level"/>
<gene>
    <name type="primary">mug65</name>
    <name type="ORF">SPAC1296.04</name>
</gene>
<accession>O94611</accession>
<evidence type="ECO:0000269" key="1">
    <source>
    </source>
</evidence>
<protein>
    <recommendedName>
        <fullName>Meiotically up-regulated gene 65 protein</fullName>
    </recommendedName>
</protein>
<dbReference type="EMBL" id="CU329670">
    <property type="protein sequence ID" value="CAB36510.3"/>
    <property type="molecule type" value="Genomic_DNA"/>
</dbReference>
<dbReference type="PIR" id="T37565">
    <property type="entry name" value="T37565"/>
</dbReference>
<dbReference type="RefSeq" id="NP_593044.2">
    <property type="nucleotide sequence ID" value="NM_001018443.2"/>
</dbReference>
<dbReference type="SMR" id="O94611"/>
<dbReference type="BioGRID" id="279484">
    <property type="interactions" value="13"/>
</dbReference>
<dbReference type="STRING" id="284812.O94611"/>
<dbReference type="iPTMnet" id="O94611"/>
<dbReference type="PaxDb" id="4896-SPAC1296.04.1"/>
<dbReference type="EnsemblFungi" id="SPAC1296.04.1">
    <property type="protein sequence ID" value="SPAC1296.04.1:pep"/>
    <property type="gene ID" value="SPAC1296.04"/>
</dbReference>
<dbReference type="GeneID" id="2543049"/>
<dbReference type="KEGG" id="spo:2543049"/>
<dbReference type="PomBase" id="SPAC1296.04">
    <property type="gene designation" value="mug65"/>
</dbReference>
<dbReference type="VEuPathDB" id="FungiDB:SPAC1296.04"/>
<dbReference type="eggNOG" id="ENOG502S2MG">
    <property type="taxonomic scope" value="Eukaryota"/>
</dbReference>
<dbReference type="HOGENOM" id="CLU_028361_0_0_1"/>
<dbReference type="InParanoid" id="O94611"/>
<dbReference type="OMA" id="WEWAWQR"/>
<dbReference type="PhylomeDB" id="O94611"/>
<dbReference type="PRO" id="PR:O94611"/>
<dbReference type="Proteomes" id="UP000002485">
    <property type="component" value="Chromosome I"/>
</dbReference>
<dbReference type="GO" id="GO:0005778">
    <property type="term" value="C:peroxisomal membrane"/>
    <property type="evidence" value="ECO:0007669"/>
    <property type="project" value="UniProtKB-ARBA"/>
</dbReference>
<dbReference type="GO" id="GO:0005628">
    <property type="term" value="C:prospore membrane"/>
    <property type="evidence" value="ECO:0000266"/>
    <property type="project" value="PomBase"/>
</dbReference>
<dbReference type="GO" id="GO:0030476">
    <property type="term" value="P:ascospore wall assembly"/>
    <property type="evidence" value="ECO:0000266"/>
    <property type="project" value="PomBase"/>
</dbReference>
<dbReference type="GO" id="GO:0016236">
    <property type="term" value="P:macroautophagy"/>
    <property type="evidence" value="ECO:0000266"/>
    <property type="project" value="PomBase"/>
</dbReference>
<dbReference type="GO" id="GO:0007031">
    <property type="term" value="P:peroxisome organization"/>
    <property type="evidence" value="ECO:0007669"/>
    <property type="project" value="UniProtKB-ARBA"/>
</dbReference>
<dbReference type="InterPro" id="IPR006614">
    <property type="entry name" value="Peroxin/Ferlin"/>
</dbReference>
<dbReference type="InterPro" id="IPR010482">
    <property type="entry name" value="TECPR1-like_DysF"/>
</dbReference>
<dbReference type="InterPro" id="IPR051513">
    <property type="entry name" value="Tectonin_beta-propeller"/>
</dbReference>
<dbReference type="PANTHER" id="PTHR23250">
    <property type="entry name" value="DYSFERLIN-RELATED"/>
    <property type="match status" value="1"/>
</dbReference>
<dbReference type="PANTHER" id="PTHR23250:SF1">
    <property type="entry name" value="TECTONIN BETA-PROPELLER REPEAT-CONTAINING PROTEIN 1"/>
    <property type="match status" value="1"/>
</dbReference>
<dbReference type="Pfam" id="PF06398">
    <property type="entry name" value="Pex24p"/>
    <property type="match status" value="1"/>
</dbReference>
<dbReference type="SMART" id="SM00694">
    <property type="entry name" value="DysFC"/>
    <property type="match status" value="1"/>
</dbReference>
<comment type="function">
    <text evidence="1">Has a role in meiosis.</text>
</comment>
<organism>
    <name type="scientific">Schizosaccharomyces pombe (strain 972 / ATCC 24843)</name>
    <name type="common">Fission yeast</name>
    <dbReference type="NCBI Taxonomy" id="284812"/>
    <lineage>
        <taxon>Eukaryota</taxon>
        <taxon>Fungi</taxon>
        <taxon>Dikarya</taxon>
        <taxon>Ascomycota</taxon>
        <taxon>Taphrinomycotina</taxon>
        <taxon>Schizosaccharomycetes</taxon>
        <taxon>Schizosaccharomycetales</taxon>
        <taxon>Schizosaccharomycetaceae</taxon>
        <taxon>Schizosaccharomyces</taxon>
    </lineage>
</organism>
<keyword id="KW-0469">Meiosis</keyword>
<keyword id="KW-1185">Reference proteome</keyword>